<geneLocation type="chloroplast"/>
<sequence length="133" mass="14607">MTLNLSVLTPNRIVWDSEVEEIVLSTNSGQIGILPNHAPIATAVDIGILRIRLNDQWLTMALMGGFARIGNNEITVLVNDAEKGSDIDPQEAQQTLELAEANVKKAEGRRQKIEANLALRRARTRVEAINPIS</sequence>
<reference key="1">
    <citation type="journal article" date="2006" name="Mol. Genet. Genomics">
        <title>The chloroplast genome of Nicotiana sylvestris and Nicotiana tomentosiformis: complete sequencing confirms that the Nicotiana sylvestris progenitor is the maternal genome donor of Nicotiana tabacum.</title>
        <authorList>
            <person name="Yukawa M."/>
            <person name="Tsudzuki T."/>
            <person name="Sugiura M."/>
        </authorList>
    </citation>
    <scope>NUCLEOTIDE SEQUENCE [LARGE SCALE GENOMIC DNA]</scope>
</reference>
<organism>
    <name type="scientific">Nicotiana sylvestris</name>
    <name type="common">Wood tobacco</name>
    <name type="synonym">South American tobacco</name>
    <dbReference type="NCBI Taxonomy" id="4096"/>
    <lineage>
        <taxon>Eukaryota</taxon>
        <taxon>Viridiplantae</taxon>
        <taxon>Streptophyta</taxon>
        <taxon>Embryophyta</taxon>
        <taxon>Tracheophyta</taxon>
        <taxon>Spermatophyta</taxon>
        <taxon>Magnoliopsida</taxon>
        <taxon>eudicotyledons</taxon>
        <taxon>Gunneridae</taxon>
        <taxon>Pentapetalae</taxon>
        <taxon>asterids</taxon>
        <taxon>lamiids</taxon>
        <taxon>Solanales</taxon>
        <taxon>Solanaceae</taxon>
        <taxon>Nicotianoideae</taxon>
        <taxon>Nicotianeae</taxon>
        <taxon>Nicotiana</taxon>
    </lineage>
</organism>
<keyword id="KW-0066">ATP synthesis</keyword>
<keyword id="KW-0139">CF(1)</keyword>
<keyword id="KW-0150">Chloroplast</keyword>
<keyword id="KW-0375">Hydrogen ion transport</keyword>
<keyword id="KW-0406">Ion transport</keyword>
<keyword id="KW-0472">Membrane</keyword>
<keyword id="KW-0934">Plastid</keyword>
<keyword id="KW-1185">Reference proteome</keyword>
<keyword id="KW-0793">Thylakoid</keyword>
<keyword id="KW-0813">Transport</keyword>
<name>ATPE_NICSY</name>
<gene>
    <name evidence="1" type="primary">atpE</name>
</gene>
<accession>Q3C1J6</accession>
<protein>
    <recommendedName>
        <fullName evidence="1">ATP synthase epsilon chain, chloroplastic</fullName>
    </recommendedName>
    <alternativeName>
        <fullName evidence="1">ATP synthase F1 sector epsilon subunit</fullName>
    </alternativeName>
    <alternativeName>
        <fullName evidence="1">F-ATPase epsilon subunit</fullName>
    </alternativeName>
</protein>
<dbReference type="EMBL" id="AB237912">
    <property type="protein sequence ID" value="BAE46657.1"/>
    <property type="molecule type" value="Genomic_DNA"/>
</dbReference>
<dbReference type="RefSeq" id="YP_358682.1">
    <property type="nucleotide sequence ID" value="NC_007500.1"/>
</dbReference>
<dbReference type="SMR" id="Q3C1J6"/>
<dbReference type="GeneID" id="3735051"/>
<dbReference type="KEGG" id="nsy:3735051"/>
<dbReference type="OrthoDB" id="20555at4085"/>
<dbReference type="Proteomes" id="UP000189701">
    <property type="component" value="Chloroplast Pltd"/>
</dbReference>
<dbReference type="GO" id="GO:0009535">
    <property type="term" value="C:chloroplast thylakoid membrane"/>
    <property type="evidence" value="ECO:0007669"/>
    <property type="project" value="UniProtKB-SubCell"/>
</dbReference>
<dbReference type="GO" id="GO:0045259">
    <property type="term" value="C:proton-transporting ATP synthase complex"/>
    <property type="evidence" value="ECO:0007669"/>
    <property type="project" value="UniProtKB-KW"/>
</dbReference>
<dbReference type="GO" id="GO:0005524">
    <property type="term" value="F:ATP binding"/>
    <property type="evidence" value="ECO:0007669"/>
    <property type="project" value="UniProtKB-UniRule"/>
</dbReference>
<dbReference type="GO" id="GO:0046933">
    <property type="term" value="F:proton-transporting ATP synthase activity, rotational mechanism"/>
    <property type="evidence" value="ECO:0007669"/>
    <property type="project" value="UniProtKB-UniRule"/>
</dbReference>
<dbReference type="CDD" id="cd12152">
    <property type="entry name" value="F1-ATPase_delta"/>
    <property type="match status" value="1"/>
</dbReference>
<dbReference type="FunFam" id="2.60.15.10:FF:000002">
    <property type="entry name" value="ATP synthase epsilon chain, chloroplastic"/>
    <property type="match status" value="1"/>
</dbReference>
<dbReference type="Gene3D" id="6.10.140.480">
    <property type="match status" value="1"/>
</dbReference>
<dbReference type="Gene3D" id="2.60.15.10">
    <property type="entry name" value="F0F1 ATP synthase delta/epsilon subunit, N-terminal"/>
    <property type="match status" value="1"/>
</dbReference>
<dbReference type="HAMAP" id="MF_00530">
    <property type="entry name" value="ATP_synth_epsil_bac"/>
    <property type="match status" value="1"/>
</dbReference>
<dbReference type="InterPro" id="IPR001469">
    <property type="entry name" value="ATP_synth_F1_dsu/esu"/>
</dbReference>
<dbReference type="InterPro" id="IPR020546">
    <property type="entry name" value="ATP_synth_F1_dsu/esu_N"/>
</dbReference>
<dbReference type="InterPro" id="IPR020547">
    <property type="entry name" value="ATP_synth_F1_esu_C"/>
</dbReference>
<dbReference type="InterPro" id="IPR036771">
    <property type="entry name" value="ATPsynth_dsu/esu_N"/>
</dbReference>
<dbReference type="NCBIfam" id="TIGR01216">
    <property type="entry name" value="ATP_synt_epsi"/>
    <property type="match status" value="1"/>
</dbReference>
<dbReference type="PANTHER" id="PTHR13822">
    <property type="entry name" value="ATP SYNTHASE DELTA/EPSILON CHAIN"/>
    <property type="match status" value="1"/>
</dbReference>
<dbReference type="PANTHER" id="PTHR13822:SF10">
    <property type="entry name" value="ATP SYNTHASE EPSILON CHAIN, CHLOROPLASTIC"/>
    <property type="match status" value="1"/>
</dbReference>
<dbReference type="Pfam" id="PF00401">
    <property type="entry name" value="ATP-synt_DE"/>
    <property type="match status" value="1"/>
</dbReference>
<dbReference type="Pfam" id="PF02823">
    <property type="entry name" value="ATP-synt_DE_N"/>
    <property type="match status" value="1"/>
</dbReference>
<dbReference type="SUPFAM" id="SSF51344">
    <property type="entry name" value="Epsilon subunit of F1F0-ATP synthase N-terminal domain"/>
    <property type="match status" value="1"/>
</dbReference>
<comment type="function">
    <text evidence="1">Produces ATP from ADP in the presence of a proton gradient across the membrane.</text>
</comment>
<comment type="subunit">
    <text evidence="1">F-type ATPases have 2 components, CF(1) - the catalytic core - and CF(0) - the membrane proton channel. CF(1) has five subunits: alpha(3), beta(3), gamma(1), delta(1), epsilon(1). CF(0) has three main subunits: a, b and c.</text>
</comment>
<comment type="subcellular location">
    <subcellularLocation>
        <location evidence="1">Plastid</location>
        <location evidence="1">Chloroplast thylakoid membrane</location>
        <topology evidence="1">Peripheral membrane protein</topology>
    </subcellularLocation>
</comment>
<comment type="similarity">
    <text evidence="1">Belongs to the ATPase epsilon chain family.</text>
</comment>
<proteinExistence type="inferred from homology"/>
<evidence type="ECO:0000255" key="1">
    <source>
        <dbReference type="HAMAP-Rule" id="MF_00530"/>
    </source>
</evidence>
<feature type="chain" id="PRO_0000275207" description="ATP synthase epsilon chain, chloroplastic">
    <location>
        <begin position="1"/>
        <end position="133"/>
    </location>
</feature>